<reference key="1">
    <citation type="journal article" date="2009" name="BMC Genomics">
        <title>Pseudogene accumulation in the evolutionary histories of Salmonella enterica serovars Paratyphi A and Typhi.</title>
        <authorList>
            <person name="Holt K.E."/>
            <person name="Thomson N.R."/>
            <person name="Wain J."/>
            <person name="Langridge G.C."/>
            <person name="Hasan R."/>
            <person name="Bhutta Z.A."/>
            <person name="Quail M.A."/>
            <person name="Norbertczak H."/>
            <person name="Walker D."/>
            <person name="Simmonds M."/>
            <person name="White B."/>
            <person name="Bason N."/>
            <person name="Mungall K."/>
            <person name="Dougan G."/>
            <person name="Parkhill J."/>
        </authorList>
    </citation>
    <scope>NUCLEOTIDE SEQUENCE [LARGE SCALE GENOMIC DNA]</scope>
    <source>
        <strain>AKU_12601</strain>
    </source>
</reference>
<accession>B5BKC5</accession>
<gene>
    <name evidence="1" type="primary">slyA</name>
    <name type="ordered locus">SSPA1309</name>
</gene>
<evidence type="ECO:0000255" key="1">
    <source>
        <dbReference type="HAMAP-Rule" id="MF_01819"/>
    </source>
</evidence>
<feature type="chain" id="PRO_1000188017" description="Transcriptional regulator SlyA">
    <location>
        <begin position="1"/>
        <end position="144"/>
    </location>
</feature>
<feature type="domain" description="HTH marR-type" evidence="1">
    <location>
        <begin position="2"/>
        <end position="135"/>
    </location>
</feature>
<feature type="DNA-binding region" description="H-T-H motif" evidence="1">
    <location>
        <begin position="49"/>
        <end position="72"/>
    </location>
</feature>
<keyword id="KW-0010">Activator</keyword>
<keyword id="KW-0238">DNA-binding</keyword>
<keyword id="KW-0678">Repressor</keyword>
<keyword id="KW-0804">Transcription</keyword>
<keyword id="KW-0805">Transcription regulation</keyword>
<name>SLYA_SALPK</name>
<proteinExistence type="inferred from homology"/>
<dbReference type="EMBL" id="FM200053">
    <property type="protein sequence ID" value="CAR59484.1"/>
    <property type="molecule type" value="Genomic_DNA"/>
</dbReference>
<dbReference type="SMR" id="B5BKC5"/>
<dbReference type="KEGG" id="sek:SSPA1309"/>
<dbReference type="HOGENOM" id="CLU_083287_18_2_6"/>
<dbReference type="Proteomes" id="UP000001869">
    <property type="component" value="Chromosome"/>
</dbReference>
<dbReference type="GO" id="GO:0003677">
    <property type="term" value="F:DNA binding"/>
    <property type="evidence" value="ECO:0007669"/>
    <property type="project" value="UniProtKB-UniRule"/>
</dbReference>
<dbReference type="GO" id="GO:0003700">
    <property type="term" value="F:DNA-binding transcription factor activity"/>
    <property type="evidence" value="ECO:0007669"/>
    <property type="project" value="UniProtKB-UniRule"/>
</dbReference>
<dbReference type="GO" id="GO:0006950">
    <property type="term" value="P:response to stress"/>
    <property type="evidence" value="ECO:0007669"/>
    <property type="project" value="TreeGrafter"/>
</dbReference>
<dbReference type="FunFam" id="1.10.10.10:FF:000261">
    <property type="entry name" value="Transcriptional regulator SlyA"/>
    <property type="match status" value="1"/>
</dbReference>
<dbReference type="Gene3D" id="1.10.10.10">
    <property type="entry name" value="Winged helix-like DNA-binding domain superfamily/Winged helix DNA-binding domain"/>
    <property type="match status" value="1"/>
</dbReference>
<dbReference type="HAMAP" id="MF_01819">
    <property type="entry name" value="HTH_type_SlyA"/>
    <property type="match status" value="1"/>
</dbReference>
<dbReference type="InterPro" id="IPR000835">
    <property type="entry name" value="HTH_MarR-typ"/>
</dbReference>
<dbReference type="InterPro" id="IPR039422">
    <property type="entry name" value="MarR/SlyA-like"/>
</dbReference>
<dbReference type="InterPro" id="IPR023187">
    <property type="entry name" value="Tscrpt_reg_MarR-type_CS"/>
</dbReference>
<dbReference type="InterPro" id="IPR023071">
    <property type="entry name" value="Tscrpt_reg_SlyA"/>
</dbReference>
<dbReference type="InterPro" id="IPR036388">
    <property type="entry name" value="WH-like_DNA-bd_sf"/>
</dbReference>
<dbReference type="InterPro" id="IPR036390">
    <property type="entry name" value="WH_DNA-bd_sf"/>
</dbReference>
<dbReference type="NCBIfam" id="NF002926">
    <property type="entry name" value="PRK03573.1"/>
    <property type="match status" value="1"/>
</dbReference>
<dbReference type="PANTHER" id="PTHR33164:SF64">
    <property type="entry name" value="TRANSCRIPTIONAL REGULATOR SLYA"/>
    <property type="match status" value="1"/>
</dbReference>
<dbReference type="PANTHER" id="PTHR33164">
    <property type="entry name" value="TRANSCRIPTIONAL REGULATOR, MARR FAMILY"/>
    <property type="match status" value="1"/>
</dbReference>
<dbReference type="Pfam" id="PF01047">
    <property type="entry name" value="MarR"/>
    <property type="match status" value="1"/>
</dbReference>
<dbReference type="PRINTS" id="PR00598">
    <property type="entry name" value="HTHMARR"/>
</dbReference>
<dbReference type="SMART" id="SM00347">
    <property type="entry name" value="HTH_MARR"/>
    <property type="match status" value="1"/>
</dbReference>
<dbReference type="SUPFAM" id="SSF46785">
    <property type="entry name" value="Winged helix' DNA-binding domain"/>
    <property type="match status" value="1"/>
</dbReference>
<dbReference type="PROSITE" id="PS01117">
    <property type="entry name" value="HTH_MARR_1"/>
    <property type="match status" value="1"/>
</dbReference>
<dbReference type="PROSITE" id="PS50995">
    <property type="entry name" value="HTH_MARR_2"/>
    <property type="match status" value="1"/>
</dbReference>
<protein>
    <recommendedName>
        <fullName evidence="1">Transcriptional regulator SlyA</fullName>
    </recommendedName>
</protein>
<organism>
    <name type="scientific">Salmonella paratyphi A (strain AKU_12601)</name>
    <dbReference type="NCBI Taxonomy" id="554290"/>
    <lineage>
        <taxon>Bacteria</taxon>
        <taxon>Pseudomonadati</taxon>
        <taxon>Pseudomonadota</taxon>
        <taxon>Gammaproteobacteria</taxon>
        <taxon>Enterobacterales</taxon>
        <taxon>Enterobacteriaceae</taxon>
        <taxon>Salmonella</taxon>
    </lineage>
</organism>
<comment type="function">
    <text evidence="1">Transcription regulator that can specifically activate or repress expression of target genes.</text>
</comment>
<comment type="subunit">
    <text evidence="1">Homodimer.</text>
</comment>
<comment type="similarity">
    <text evidence="1">Belongs to the SlyA family.</text>
</comment>
<sequence length="144" mass="16448">MESPLGSDLARLVRIWRALIDHRLKPLELTQTHWVTLHNIHQLPPDQSQIQLAKAIGIEQPSLVRTLDQLEDKGLISRQTCASDRRAKRIKLTEKAEPLIAEMEEVIHKTRGEILAGISSEEIELLIKLVAKLEHNIMELHSHD</sequence>